<keyword id="KW-0025">Alternative splicing</keyword>
<keyword id="KW-0963">Cytoplasm</keyword>
<keyword id="KW-0479">Metal-binding</keyword>
<keyword id="KW-0489">Methyltransferase</keyword>
<keyword id="KW-1185">Reference proteome</keyword>
<keyword id="KW-0949">S-adenosyl-L-methionine</keyword>
<keyword id="KW-0808">Transferase</keyword>
<keyword id="KW-0819">tRNA processing</keyword>
<keyword id="KW-0862">Zinc</keyword>
<keyword id="KW-0863">Zinc-finger</keyword>
<comment type="function">
    <text evidence="1">Probable adenosyl-L-methionine (AdoMet)-dependent tRNA (uracil-O(2)-)-methyltransferase.</text>
</comment>
<comment type="catalytic activity">
    <reaction>
        <text>uridine(44) in tRNA(Ser) + S-adenosyl-L-methionine = 2'-O-methyluridine(44) in tRNA(Ser) + S-adenosyl-L-homocysteine + H(+)</text>
        <dbReference type="Rhea" id="RHEA:43100"/>
        <dbReference type="Rhea" id="RHEA-COMP:10339"/>
        <dbReference type="Rhea" id="RHEA-COMP:10340"/>
        <dbReference type="ChEBI" id="CHEBI:15378"/>
        <dbReference type="ChEBI" id="CHEBI:57856"/>
        <dbReference type="ChEBI" id="CHEBI:59789"/>
        <dbReference type="ChEBI" id="CHEBI:65315"/>
        <dbReference type="ChEBI" id="CHEBI:74478"/>
        <dbReference type="EC" id="2.1.1.211"/>
    </reaction>
</comment>
<comment type="subcellular location">
    <subcellularLocation>
        <location evidence="2">Cytoplasm</location>
    </subcellularLocation>
</comment>
<comment type="alternative products">
    <event type="alternative splicing"/>
    <isoform>
        <id>Q45EK7-1</id>
        <name>c</name>
        <sequence type="displayed"/>
    </isoform>
    <isoform>
        <id>Q45EK7-3</id>
        <name>b</name>
        <sequence type="described" ref="VSP_020595"/>
    </isoform>
</comment>
<comment type="similarity">
    <text evidence="2">Belongs to the TRM44 family.</text>
</comment>
<protein>
    <recommendedName>
        <fullName>Probable tRNA (uracil-O(2)-)-methyltransferase</fullName>
        <ecNumber>2.1.1.211</ecNumber>
    </recommendedName>
</protein>
<proteinExistence type="inferred from homology"/>
<gene>
    <name type="ORF">C23G10.7</name>
</gene>
<reference key="1">
    <citation type="journal article" date="1998" name="Science">
        <title>Genome sequence of the nematode C. elegans: a platform for investigating biology.</title>
        <authorList>
            <consortium name="The C. elegans sequencing consortium"/>
        </authorList>
    </citation>
    <scope>NUCLEOTIDE SEQUENCE [LARGE SCALE GENOMIC DNA]</scope>
    <scope>ALTERNATIVE SPLICING</scope>
    <source>
        <strain>Bristol N2</strain>
    </source>
</reference>
<feature type="chain" id="PRO_0000249898" description="Probable tRNA (uracil-O(2)-)-methyltransferase">
    <location>
        <begin position="1"/>
        <end position="563"/>
    </location>
</feature>
<feature type="zinc finger region" description="C3H1-type">
    <location>
        <begin position="536"/>
        <end position="563"/>
    </location>
</feature>
<feature type="splice variant" id="VSP_020595" description="In isoform b." evidence="2">
    <original>H</original>
    <variation>HVSTTAIDKK</variation>
    <location>
        <position position="507"/>
    </location>
</feature>
<sequence length="563" mass="64872">MFPGSTWTVIVEQIAEYEEVIDPKAFFDKIISLWKEYPNAISNRITTSVSVDTDSDLWNEVLRTFETHYKFCPRDCSEIAITKIIHKDLANNKFSDNAFEVSYYEEELLVRFYPITLDGMQHPHFESPYSIAIKIPTDTSIQLQFLKQANSSQEHFEFMKKQAFKQLYTWLKGIDLSKSSRKTNSLLDKESYIKTYRHIREDYGRGMIKGWTENSNPQKSIFEDCGIASYINELVNSDLLPKPNKFVDIGCGNGLLVHLLNKIGMSGYGIDVRHRNIWKTTLKDVDLREMPVDPQIVVQNEPHFDLDVDLLIGNHSDELTPWIPVMAAKLNCNFFLIPCCPFNFFGKYANNGSHLGPKRIVSQYESFFEWTVSVAERLGFDVKIDRLAIPSTKRLCIIGRVPEGGLCPNVDETINSMTEGQKFIARPKEIKTTNCMNIPVTDRERIAKKLFDFVLNYSDAVRDGWRCGGEVPLAQLAALLTEEDKKLMKDQDGGLQTFLRNQHQIFHVYQATARLRDFRQPVVQKRQSWKPKKAETIRKAPCWMSLHHPDGCPVGQEACRYEH</sequence>
<accession>Q45EK7</accession>
<accession>Q45EK5</accession>
<accession>Q45EK6</accession>
<dbReference type="EC" id="2.1.1.211"/>
<dbReference type="EMBL" id="FO080630">
    <property type="protein sequence ID" value="CCD65300.1"/>
    <property type="molecule type" value="Genomic_DNA"/>
</dbReference>
<dbReference type="EMBL" id="FO080630">
    <property type="protein sequence ID" value="CCD65301.1"/>
    <property type="molecule type" value="Genomic_DNA"/>
</dbReference>
<dbReference type="EMBL" id="FO080630">
    <property type="protein sequence ID" value="CCD65302.1"/>
    <property type="molecule type" value="Genomic_DNA"/>
</dbReference>
<dbReference type="RefSeq" id="NP_001033350.1">
    <molecule id="Q45EK7-1"/>
    <property type="nucleotide sequence ID" value="NM_001038261.5"/>
</dbReference>
<dbReference type="RefSeq" id="NP_741175.2">
    <property type="nucleotide sequence ID" value="NM_171153.4"/>
</dbReference>
<dbReference type="RefSeq" id="NP_741176.2">
    <molecule id="Q45EK7-3"/>
    <property type="nucleotide sequence ID" value="NM_171872.6"/>
</dbReference>
<dbReference type="FunCoup" id="Q45EK7">
    <property type="interactions" value="2431"/>
</dbReference>
<dbReference type="STRING" id="6239.C23G10.7b.1"/>
<dbReference type="PaxDb" id="6239-C23G10.7b"/>
<dbReference type="PeptideAtlas" id="Q45EK7"/>
<dbReference type="EnsemblMetazoa" id="C23G10.7b.1">
    <molecule id="Q45EK7-3"/>
    <property type="protein sequence ID" value="C23G10.7b.1"/>
    <property type="gene ID" value="WBGene00016014"/>
</dbReference>
<dbReference type="EnsemblMetazoa" id="C23G10.7c.1">
    <molecule id="Q45EK7-1"/>
    <property type="protein sequence ID" value="C23G10.7c.1"/>
    <property type="gene ID" value="WBGene00016014"/>
</dbReference>
<dbReference type="GeneID" id="175876"/>
<dbReference type="KEGG" id="cel:CELE_C23G10.7"/>
<dbReference type="UCSC" id="C23G10.7c">
    <molecule id="Q45EK7-1"/>
    <property type="organism name" value="c. elegans"/>
</dbReference>
<dbReference type="AGR" id="WB:WBGene00016014"/>
<dbReference type="CTD" id="175876"/>
<dbReference type="WormBase" id="C23G10.7b">
    <molecule id="Q45EK7-3"/>
    <property type="protein sequence ID" value="CE38938"/>
    <property type="gene ID" value="WBGene00016014"/>
</dbReference>
<dbReference type="WormBase" id="C23G10.7c">
    <molecule id="Q45EK7-1"/>
    <property type="protein sequence ID" value="CE38939"/>
    <property type="gene ID" value="WBGene00016014"/>
</dbReference>
<dbReference type="eggNOG" id="KOG3790">
    <property type="taxonomic scope" value="Eukaryota"/>
</dbReference>
<dbReference type="GeneTree" id="ENSGT00390000000645"/>
<dbReference type="HOGENOM" id="CLU_021025_0_0_1"/>
<dbReference type="InParanoid" id="Q45EK7"/>
<dbReference type="OMA" id="CFFKLHH"/>
<dbReference type="OrthoDB" id="10047021at2759"/>
<dbReference type="PhylomeDB" id="Q45EK7"/>
<dbReference type="PRO" id="PR:Q45EK7"/>
<dbReference type="Proteomes" id="UP000001940">
    <property type="component" value="Chromosome III"/>
</dbReference>
<dbReference type="Bgee" id="WBGene00016014">
    <property type="expression patterns" value="Expressed in adult organism and 4 other cell types or tissues"/>
</dbReference>
<dbReference type="GO" id="GO:0005737">
    <property type="term" value="C:cytoplasm"/>
    <property type="evidence" value="ECO:0007669"/>
    <property type="project" value="UniProtKB-SubCell"/>
</dbReference>
<dbReference type="GO" id="GO:0016300">
    <property type="term" value="F:tRNA (uridine) methyltransferase activity"/>
    <property type="evidence" value="ECO:0000318"/>
    <property type="project" value="GO_Central"/>
</dbReference>
<dbReference type="GO" id="GO:0141101">
    <property type="term" value="F:tRNA(Ser) (uridine(44)-2'-O-)-methyltransferase activity"/>
    <property type="evidence" value="ECO:0007669"/>
    <property type="project" value="UniProtKB-EC"/>
</dbReference>
<dbReference type="GO" id="GO:0008270">
    <property type="term" value="F:zinc ion binding"/>
    <property type="evidence" value="ECO:0007669"/>
    <property type="project" value="UniProtKB-KW"/>
</dbReference>
<dbReference type="GO" id="GO:0030488">
    <property type="term" value="P:tRNA methylation"/>
    <property type="evidence" value="ECO:0000318"/>
    <property type="project" value="GO_Central"/>
</dbReference>
<dbReference type="Gene3D" id="3.40.50.150">
    <property type="entry name" value="Vaccinia Virus protein VP39"/>
    <property type="match status" value="1"/>
</dbReference>
<dbReference type="InterPro" id="IPR029063">
    <property type="entry name" value="SAM-dependent_MTases_sf"/>
</dbReference>
<dbReference type="InterPro" id="IPR011671">
    <property type="entry name" value="tRNA_uracil_MeTrfase"/>
</dbReference>
<dbReference type="PANTHER" id="PTHR21210">
    <property type="entry name" value="TRNA (URACIL-O(2)-)-METHYLTRANSFERASE-RELATED"/>
    <property type="match status" value="1"/>
</dbReference>
<dbReference type="PANTHER" id="PTHR21210:SF0">
    <property type="entry name" value="TRNA (URACIL-O(2)-)-METHYLTRANSFERASE-RELATED"/>
    <property type="match status" value="1"/>
</dbReference>
<dbReference type="Pfam" id="PF07757">
    <property type="entry name" value="AdoMet_MTase"/>
    <property type="match status" value="1"/>
</dbReference>
<dbReference type="SUPFAM" id="SSF53335">
    <property type="entry name" value="S-adenosyl-L-methionine-dependent methyltransferases"/>
    <property type="match status" value="1"/>
</dbReference>
<evidence type="ECO:0000250" key="1"/>
<evidence type="ECO:0000305" key="2"/>
<name>TRM44_CAEEL</name>
<organism>
    <name type="scientific">Caenorhabditis elegans</name>
    <dbReference type="NCBI Taxonomy" id="6239"/>
    <lineage>
        <taxon>Eukaryota</taxon>
        <taxon>Metazoa</taxon>
        <taxon>Ecdysozoa</taxon>
        <taxon>Nematoda</taxon>
        <taxon>Chromadorea</taxon>
        <taxon>Rhabditida</taxon>
        <taxon>Rhabditina</taxon>
        <taxon>Rhabditomorpha</taxon>
        <taxon>Rhabditoidea</taxon>
        <taxon>Rhabditidae</taxon>
        <taxon>Peloderinae</taxon>
        <taxon>Caenorhabditis</taxon>
    </lineage>
</organism>